<keyword id="KW-0030">Aminoacyl-tRNA synthetase</keyword>
<keyword id="KW-0067">ATP-binding</keyword>
<keyword id="KW-0963">Cytoplasm</keyword>
<keyword id="KW-0436">Ligase</keyword>
<keyword id="KW-0547">Nucleotide-binding</keyword>
<keyword id="KW-0648">Protein biosynthesis</keyword>
<keyword id="KW-1185">Reference proteome</keyword>
<accession>Q5V4J1</accession>
<dbReference type="EC" id="6.1.1.1" evidence="1"/>
<dbReference type="EMBL" id="AY596297">
    <property type="protein sequence ID" value="AAV45561.1"/>
    <property type="molecule type" value="Genomic_DNA"/>
</dbReference>
<dbReference type="RefSeq" id="WP_011223081.1">
    <property type="nucleotide sequence ID" value="NC_006396.1"/>
</dbReference>
<dbReference type="SMR" id="Q5V4J1"/>
<dbReference type="STRING" id="272569.rrnAC0543"/>
<dbReference type="PaxDb" id="272569-rrnAC0543"/>
<dbReference type="EnsemblBacteria" id="AAV45561">
    <property type="protein sequence ID" value="AAV45561"/>
    <property type="gene ID" value="rrnAC0543"/>
</dbReference>
<dbReference type="GeneID" id="40151600"/>
<dbReference type="KEGG" id="hma:rrnAC0543"/>
<dbReference type="PATRIC" id="fig|272569.17.peg.1309"/>
<dbReference type="eggNOG" id="arCOG01886">
    <property type="taxonomic scope" value="Archaea"/>
</dbReference>
<dbReference type="HOGENOM" id="CLU_035267_0_1_2"/>
<dbReference type="Proteomes" id="UP000001169">
    <property type="component" value="Chromosome I"/>
</dbReference>
<dbReference type="GO" id="GO:0005737">
    <property type="term" value="C:cytoplasm"/>
    <property type="evidence" value="ECO:0007669"/>
    <property type="project" value="UniProtKB-SubCell"/>
</dbReference>
<dbReference type="GO" id="GO:0005524">
    <property type="term" value="F:ATP binding"/>
    <property type="evidence" value="ECO:0007669"/>
    <property type="project" value="UniProtKB-UniRule"/>
</dbReference>
<dbReference type="GO" id="GO:0004831">
    <property type="term" value="F:tyrosine-tRNA ligase activity"/>
    <property type="evidence" value="ECO:0007669"/>
    <property type="project" value="UniProtKB-UniRule"/>
</dbReference>
<dbReference type="GO" id="GO:0006437">
    <property type="term" value="P:tyrosyl-tRNA aminoacylation"/>
    <property type="evidence" value="ECO:0007669"/>
    <property type="project" value="UniProtKB-UniRule"/>
</dbReference>
<dbReference type="Gene3D" id="3.40.50.620">
    <property type="entry name" value="HUPs"/>
    <property type="match status" value="1"/>
</dbReference>
<dbReference type="Gene3D" id="1.10.240.10">
    <property type="entry name" value="Tyrosyl-Transfer RNA Synthetase"/>
    <property type="match status" value="1"/>
</dbReference>
<dbReference type="HAMAP" id="MF_02008">
    <property type="entry name" value="Tyr_tRNA_synth_type3"/>
    <property type="match status" value="1"/>
</dbReference>
<dbReference type="InterPro" id="IPR001412">
    <property type="entry name" value="aa-tRNA-synth_I_CS"/>
</dbReference>
<dbReference type="InterPro" id="IPR002305">
    <property type="entry name" value="aa-tRNA-synth_Ic"/>
</dbReference>
<dbReference type="InterPro" id="IPR014729">
    <property type="entry name" value="Rossmann-like_a/b/a_fold"/>
</dbReference>
<dbReference type="InterPro" id="IPR002307">
    <property type="entry name" value="Tyr-tRNA-ligase"/>
</dbReference>
<dbReference type="InterPro" id="IPR023684">
    <property type="entry name" value="Tyr-tRNA-ligase_3"/>
</dbReference>
<dbReference type="InterPro" id="IPR023617">
    <property type="entry name" value="Tyr-tRNA-ligase_arc/euk-type"/>
</dbReference>
<dbReference type="InterPro" id="IPR050489">
    <property type="entry name" value="Tyr-tRNA_synthase"/>
</dbReference>
<dbReference type="NCBIfam" id="NF006330">
    <property type="entry name" value="PRK08560.1"/>
    <property type="match status" value="1"/>
</dbReference>
<dbReference type="NCBIfam" id="TIGR00234">
    <property type="entry name" value="tyrS"/>
    <property type="match status" value="1"/>
</dbReference>
<dbReference type="PANTHER" id="PTHR46264:SF4">
    <property type="entry name" value="TYROSINE--TRNA LIGASE, CYTOPLASMIC"/>
    <property type="match status" value="1"/>
</dbReference>
<dbReference type="PANTHER" id="PTHR46264">
    <property type="entry name" value="TYROSINE-TRNA LIGASE"/>
    <property type="match status" value="1"/>
</dbReference>
<dbReference type="Pfam" id="PF00579">
    <property type="entry name" value="tRNA-synt_1b"/>
    <property type="match status" value="1"/>
</dbReference>
<dbReference type="PIRSF" id="PIRSF006588">
    <property type="entry name" value="TyrRS_arch_euk"/>
    <property type="match status" value="1"/>
</dbReference>
<dbReference type="PRINTS" id="PR01040">
    <property type="entry name" value="TRNASYNTHTYR"/>
</dbReference>
<dbReference type="SUPFAM" id="SSF52374">
    <property type="entry name" value="Nucleotidylyl transferase"/>
    <property type="match status" value="1"/>
</dbReference>
<dbReference type="PROSITE" id="PS00178">
    <property type="entry name" value="AA_TRNA_LIGASE_I"/>
    <property type="match status" value="1"/>
</dbReference>
<organism>
    <name type="scientific">Haloarcula marismortui (strain ATCC 43049 / DSM 3752 / JCM 8966 / VKM B-1809)</name>
    <name type="common">Halobacterium marismortui</name>
    <dbReference type="NCBI Taxonomy" id="272569"/>
    <lineage>
        <taxon>Archaea</taxon>
        <taxon>Methanobacteriati</taxon>
        <taxon>Methanobacteriota</taxon>
        <taxon>Stenosarchaea group</taxon>
        <taxon>Halobacteria</taxon>
        <taxon>Halobacteriales</taxon>
        <taxon>Haloarculaceae</taxon>
        <taxon>Haloarcula</taxon>
    </lineage>
</organism>
<evidence type="ECO:0000255" key="1">
    <source>
        <dbReference type="HAMAP-Rule" id="MF_02008"/>
    </source>
</evidence>
<proteinExistence type="inferred from homology"/>
<reference key="1">
    <citation type="journal article" date="2004" name="Genome Res.">
        <title>Genome sequence of Haloarcula marismortui: a halophilic archaeon from the Dead Sea.</title>
        <authorList>
            <person name="Baliga N.S."/>
            <person name="Bonneau R."/>
            <person name="Facciotti M.T."/>
            <person name="Pan M."/>
            <person name="Glusman G."/>
            <person name="Deutsch E.W."/>
            <person name="Shannon P."/>
            <person name="Chiu Y."/>
            <person name="Weng R.S."/>
            <person name="Gan R.R."/>
            <person name="Hung P."/>
            <person name="Date S.V."/>
            <person name="Marcotte E."/>
            <person name="Hood L."/>
            <person name="Ng W.V."/>
        </authorList>
    </citation>
    <scope>NUCLEOTIDE SEQUENCE [LARGE SCALE GENOMIC DNA]</scope>
    <source>
        <strain>ATCC 43049 / DSM 3752 / JCM 8966 / VKM B-1809</strain>
    </source>
</reference>
<sequence>MDTAERLDLVTRHTTEVVTEDELRTLFEESDPSAYIGYAPTGEMHIGHFTTMRKLADFLRAGVDVTVLIADLHAHLDDNKSPFDLLDARSAYYETAIEGMIEAAGADPEDVTFVRGTDFQLDEEYTLEMYRMAAETTISRTQRAASEVVRESESPNLGGLIYPLMQTLDVKALDADIAYGGVDQRGIYMLSREILPDHGGESPICLFAPLLSGLSGGKMSASDEASKVNLTDSPDEVDEKINQAYCPAGEVEENGVLEYLQHLVFPVLDVRGDSFVVERPEEYGGDLTYESYDEVESDFVSGELHPADLKPSAASAISDVIDPVRERLADKDELLAEAYPEKYGAE</sequence>
<name>SYY_HALMA</name>
<feature type="chain" id="PRO_0000240252" description="Tyrosine--tRNA ligase">
    <location>
        <begin position="1"/>
        <end position="346"/>
    </location>
</feature>
<feature type="short sequence motif" description="'HIGH' region">
    <location>
        <begin position="40"/>
        <end position="48"/>
    </location>
</feature>
<feature type="binding site" evidence="1">
    <location>
        <position position="35"/>
    </location>
    <ligand>
        <name>L-tyrosine</name>
        <dbReference type="ChEBI" id="CHEBI:58315"/>
    </ligand>
</feature>
<feature type="binding site" evidence="1">
    <location>
        <position position="162"/>
    </location>
    <ligand>
        <name>L-tyrosine</name>
        <dbReference type="ChEBI" id="CHEBI:58315"/>
    </ligand>
</feature>
<feature type="binding site" evidence="1">
    <location>
        <position position="166"/>
    </location>
    <ligand>
        <name>L-tyrosine</name>
        <dbReference type="ChEBI" id="CHEBI:58315"/>
    </ligand>
</feature>
<feature type="binding site" evidence="1">
    <location>
        <position position="169"/>
    </location>
    <ligand>
        <name>L-tyrosine</name>
        <dbReference type="ChEBI" id="CHEBI:58315"/>
    </ligand>
</feature>
<feature type="binding site" evidence="1">
    <location>
        <position position="184"/>
    </location>
    <ligand>
        <name>L-tyrosine</name>
        <dbReference type="ChEBI" id="CHEBI:58315"/>
    </ligand>
</feature>
<comment type="function">
    <text evidence="1">Catalyzes the attachment of tyrosine to tRNA(Tyr) in a two-step reaction: tyrosine is first activated by ATP to form Tyr-AMP and then transferred to the acceptor end of tRNA(Tyr).</text>
</comment>
<comment type="catalytic activity">
    <reaction evidence="1">
        <text>tRNA(Tyr) + L-tyrosine + ATP = L-tyrosyl-tRNA(Tyr) + AMP + diphosphate + H(+)</text>
        <dbReference type="Rhea" id="RHEA:10220"/>
        <dbReference type="Rhea" id="RHEA-COMP:9706"/>
        <dbReference type="Rhea" id="RHEA-COMP:9707"/>
        <dbReference type="ChEBI" id="CHEBI:15378"/>
        <dbReference type="ChEBI" id="CHEBI:30616"/>
        <dbReference type="ChEBI" id="CHEBI:33019"/>
        <dbReference type="ChEBI" id="CHEBI:58315"/>
        <dbReference type="ChEBI" id="CHEBI:78442"/>
        <dbReference type="ChEBI" id="CHEBI:78536"/>
        <dbReference type="ChEBI" id="CHEBI:456215"/>
        <dbReference type="EC" id="6.1.1.1"/>
    </reaction>
</comment>
<comment type="subunit">
    <text evidence="1">Homodimer.</text>
</comment>
<comment type="subcellular location">
    <subcellularLocation>
        <location evidence="1">Cytoplasm</location>
    </subcellularLocation>
</comment>
<comment type="similarity">
    <text evidence="1">Belongs to the class-I aminoacyl-tRNA synthetase family. TyrS type 3 subfamily.</text>
</comment>
<protein>
    <recommendedName>
        <fullName evidence="1">Tyrosine--tRNA ligase</fullName>
        <ecNumber evidence="1">6.1.1.1</ecNumber>
    </recommendedName>
    <alternativeName>
        <fullName evidence="1">Tyrosyl-tRNA synthetase</fullName>
        <shortName evidence="1">TyrRS</shortName>
    </alternativeName>
</protein>
<gene>
    <name evidence="1" type="primary">tyrS</name>
    <name type="ordered locus">rrnAC0543</name>
</gene>